<sequence length="119" mass="12857">DLFQFGGMIGCANKGARSWLSYVNYGCYCGWGGSGTPVDELDRCCQIHDNCYGEAEKKQCGPKMTSYSWKCANDVPVCNDSKSACKGFVCDCDAAAAKCFAKAPYNKNNIGIGSKTRCQ</sequence>
<organism>
    <name type="scientific">Acanthophis antarcticus</name>
    <name type="common">Common death adder</name>
    <dbReference type="NCBI Taxonomy" id="8605"/>
    <lineage>
        <taxon>Eukaryota</taxon>
        <taxon>Metazoa</taxon>
        <taxon>Chordata</taxon>
        <taxon>Craniata</taxon>
        <taxon>Vertebrata</taxon>
        <taxon>Euteleostomi</taxon>
        <taxon>Lepidosauria</taxon>
        <taxon>Squamata</taxon>
        <taxon>Bifurcata</taxon>
        <taxon>Unidentata</taxon>
        <taxon>Episquamata</taxon>
        <taxon>Toxicofera</taxon>
        <taxon>Serpentes</taxon>
        <taxon>Colubroidea</taxon>
        <taxon>Elapidae</taxon>
        <taxon>Hydrophiinae</taxon>
        <taxon>Acanthophis</taxon>
    </lineage>
</organism>
<evidence type="ECO:0000250" key="1"/>
<evidence type="ECO:0000255" key="2">
    <source>
        <dbReference type="PROSITE-ProRule" id="PRU10035"/>
    </source>
</evidence>
<evidence type="ECO:0000255" key="3">
    <source>
        <dbReference type="PROSITE-ProRule" id="PRU10036"/>
    </source>
</evidence>
<evidence type="ECO:0000269" key="4">
    <source>
    </source>
</evidence>
<evidence type="ECO:0000305" key="5"/>
<reference key="1">
    <citation type="journal article" date="1998" name="Arch. Biochem. Biophys.">
        <title>Purification, characterization, and amino acid sequence determination of acanthins, potent inhibitors of platelet aggregation from Acanthophis antarcticus (common death adder) venom.</title>
        <authorList>
            <person name="Chow G."/>
            <person name="Subburaju S."/>
            <person name="Kini R.M."/>
        </authorList>
    </citation>
    <scope>PROTEIN SEQUENCE</scope>
    <scope>FUNCTION</scope>
    <scope>MASS SPECTROMETRY</scope>
    <source>
        <tissue>Venom</tissue>
    </source>
</reference>
<protein>
    <recommendedName>
        <fullName>Basic phospholipase A2 acanthin-1</fullName>
        <shortName>svPLA2</shortName>
        <ecNumber>3.1.1.4</ecNumber>
    </recommendedName>
    <alternativeName>
        <fullName>Acanthin I</fullName>
    </alternativeName>
    <alternativeName>
        <fullName>Phosphatidylcholine 2-acylhydrolase</fullName>
    </alternativeName>
</protein>
<comment type="function">
    <text evidence="4">Snake venom phospholipase A2 (PLA2) that potently inhibits ADP-(IC(50)=10 nM) and collagen-induced (IC(50)=7 nM) platelet aggregation when tested on human whole blood. PLA2 catalyzes the calcium-dependent hydrolysis of the 2-acyl groups in 3-sn-phosphoglycerides.</text>
</comment>
<comment type="catalytic activity">
    <reaction evidence="2 3">
        <text>a 1,2-diacyl-sn-glycero-3-phosphocholine + H2O = a 1-acyl-sn-glycero-3-phosphocholine + a fatty acid + H(+)</text>
        <dbReference type="Rhea" id="RHEA:15801"/>
        <dbReference type="ChEBI" id="CHEBI:15377"/>
        <dbReference type="ChEBI" id="CHEBI:15378"/>
        <dbReference type="ChEBI" id="CHEBI:28868"/>
        <dbReference type="ChEBI" id="CHEBI:57643"/>
        <dbReference type="ChEBI" id="CHEBI:58168"/>
        <dbReference type="EC" id="3.1.1.4"/>
    </reaction>
</comment>
<comment type="cofactor">
    <cofactor evidence="1">
        <name>Ca(2+)</name>
        <dbReference type="ChEBI" id="CHEBI:29108"/>
    </cofactor>
    <text evidence="1">Binds 1 Ca(2+) ion.</text>
</comment>
<comment type="subcellular location">
    <subcellularLocation>
        <location>Secreted</location>
    </subcellularLocation>
</comment>
<comment type="tissue specificity">
    <text>Expressed by the venom gland.</text>
</comment>
<comment type="mass spectrometry" mass="12844.58" method="Electrospray" evidence="4"/>
<comment type="similarity">
    <text evidence="5">Belongs to the phospholipase A2 family. Group I subfamily. D49 sub-subfamily.</text>
</comment>
<proteinExistence type="evidence at protein level"/>
<accession>P81236</accession>
<dbReference type="EC" id="3.1.1.4"/>
<dbReference type="SMR" id="P81236"/>
<dbReference type="GO" id="GO:0005576">
    <property type="term" value="C:extracellular region"/>
    <property type="evidence" value="ECO:0007669"/>
    <property type="project" value="UniProtKB-SubCell"/>
</dbReference>
<dbReference type="GO" id="GO:0005509">
    <property type="term" value="F:calcium ion binding"/>
    <property type="evidence" value="ECO:0007669"/>
    <property type="project" value="InterPro"/>
</dbReference>
<dbReference type="GO" id="GO:0004623">
    <property type="term" value="F:phospholipase A2 activity"/>
    <property type="evidence" value="ECO:0007669"/>
    <property type="project" value="UniProtKB-EC"/>
</dbReference>
<dbReference type="GO" id="GO:0090729">
    <property type="term" value="F:toxin activity"/>
    <property type="evidence" value="ECO:0007669"/>
    <property type="project" value="UniProtKB-KW"/>
</dbReference>
<dbReference type="GO" id="GO:0050482">
    <property type="term" value="P:arachidonate secretion"/>
    <property type="evidence" value="ECO:0007669"/>
    <property type="project" value="InterPro"/>
</dbReference>
<dbReference type="GO" id="GO:0016042">
    <property type="term" value="P:lipid catabolic process"/>
    <property type="evidence" value="ECO:0007669"/>
    <property type="project" value="UniProtKB-KW"/>
</dbReference>
<dbReference type="GO" id="GO:0006644">
    <property type="term" value="P:phospholipid metabolic process"/>
    <property type="evidence" value="ECO:0007669"/>
    <property type="project" value="InterPro"/>
</dbReference>
<dbReference type="CDD" id="cd00125">
    <property type="entry name" value="PLA2c"/>
    <property type="match status" value="1"/>
</dbReference>
<dbReference type="FunFam" id="1.20.90.10:FF:000007">
    <property type="entry name" value="Acidic phospholipase A2"/>
    <property type="match status" value="1"/>
</dbReference>
<dbReference type="Gene3D" id="1.20.90.10">
    <property type="entry name" value="Phospholipase A2 domain"/>
    <property type="match status" value="1"/>
</dbReference>
<dbReference type="InterPro" id="IPR001211">
    <property type="entry name" value="PLipase_A2"/>
</dbReference>
<dbReference type="InterPro" id="IPR033112">
    <property type="entry name" value="PLipase_A2_Asp_AS"/>
</dbReference>
<dbReference type="InterPro" id="IPR016090">
    <property type="entry name" value="PLipase_A2_dom"/>
</dbReference>
<dbReference type="InterPro" id="IPR036444">
    <property type="entry name" value="PLipase_A2_dom_sf"/>
</dbReference>
<dbReference type="InterPro" id="IPR033113">
    <property type="entry name" value="PLipase_A2_His_AS"/>
</dbReference>
<dbReference type="PANTHER" id="PTHR11716">
    <property type="entry name" value="PHOSPHOLIPASE A2 FAMILY MEMBER"/>
    <property type="match status" value="1"/>
</dbReference>
<dbReference type="PANTHER" id="PTHR11716:SF47">
    <property type="entry name" value="PHOSPHOLIPASE A2-ALPHA"/>
    <property type="match status" value="1"/>
</dbReference>
<dbReference type="Pfam" id="PF00068">
    <property type="entry name" value="Phospholip_A2_1"/>
    <property type="match status" value="1"/>
</dbReference>
<dbReference type="PRINTS" id="PR00389">
    <property type="entry name" value="PHPHLIPASEA2"/>
</dbReference>
<dbReference type="SMART" id="SM00085">
    <property type="entry name" value="PA2c"/>
    <property type="match status" value="1"/>
</dbReference>
<dbReference type="SUPFAM" id="SSF48619">
    <property type="entry name" value="Phospholipase A2, PLA2"/>
    <property type="match status" value="1"/>
</dbReference>
<dbReference type="PROSITE" id="PS00119">
    <property type="entry name" value="PA2_ASP"/>
    <property type="match status" value="1"/>
</dbReference>
<dbReference type="PROSITE" id="PS00118">
    <property type="entry name" value="PA2_HIS"/>
    <property type="match status" value="1"/>
</dbReference>
<feature type="chain" id="PRO_0000161591" description="Basic phospholipase A2 acanthin-1">
    <location>
        <begin position="1"/>
        <end position="119"/>
    </location>
</feature>
<feature type="active site" evidence="1">
    <location>
        <position position="48"/>
    </location>
</feature>
<feature type="active site" evidence="1">
    <location>
        <position position="93"/>
    </location>
</feature>
<feature type="binding site" evidence="1">
    <location>
        <position position="28"/>
    </location>
    <ligand>
        <name>Ca(2+)</name>
        <dbReference type="ChEBI" id="CHEBI:29108"/>
    </ligand>
</feature>
<feature type="binding site" evidence="1">
    <location>
        <position position="30"/>
    </location>
    <ligand>
        <name>Ca(2+)</name>
        <dbReference type="ChEBI" id="CHEBI:29108"/>
    </ligand>
</feature>
<feature type="binding site" evidence="1">
    <location>
        <position position="32"/>
    </location>
    <ligand>
        <name>Ca(2+)</name>
        <dbReference type="ChEBI" id="CHEBI:29108"/>
    </ligand>
</feature>
<feature type="binding site" evidence="1">
    <location>
        <position position="49"/>
    </location>
    <ligand>
        <name>Ca(2+)</name>
        <dbReference type="ChEBI" id="CHEBI:29108"/>
    </ligand>
</feature>
<feature type="disulfide bond" evidence="1">
    <location>
        <begin position="11"/>
        <end position="71"/>
    </location>
</feature>
<feature type="disulfide bond" evidence="1">
    <location>
        <begin position="27"/>
        <end position="118"/>
    </location>
</feature>
<feature type="disulfide bond" evidence="1">
    <location>
        <begin position="29"/>
        <end position="45"/>
    </location>
</feature>
<feature type="disulfide bond" evidence="1">
    <location>
        <begin position="44"/>
        <end position="99"/>
    </location>
</feature>
<feature type="disulfide bond" evidence="1">
    <location>
        <begin position="51"/>
        <end position="92"/>
    </location>
</feature>
<feature type="disulfide bond" evidence="1">
    <location>
        <begin position="60"/>
        <end position="85"/>
    </location>
</feature>
<feature type="disulfide bond" evidence="1">
    <location>
        <begin position="78"/>
        <end position="90"/>
    </location>
</feature>
<keyword id="KW-0106">Calcium</keyword>
<keyword id="KW-0903">Direct protein sequencing</keyword>
<keyword id="KW-1015">Disulfide bond</keyword>
<keyword id="KW-1199">Hemostasis impairing toxin</keyword>
<keyword id="KW-0378">Hydrolase</keyword>
<keyword id="KW-0442">Lipid degradation</keyword>
<keyword id="KW-0443">Lipid metabolism</keyword>
<keyword id="KW-0479">Metal-binding</keyword>
<keyword id="KW-1201">Platelet aggregation inhibiting toxin</keyword>
<keyword id="KW-0964">Secreted</keyword>
<keyword id="KW-0800">Toxin</keyword>
<name>PA2B1_ACAAN</name>